<proteinExistence type="inferred from homology"/>
<gene>
    <name evidence="1" type="primary">rhlB</name>
    <name type="ordered locus">SSON_3951</name>
</gene>
<accession>Q3YVI4</accession>
<comment type="function">
    <text evidence="1">DEAD-box RNA helicase involved in RNA degradation. Has RNA-dependent ATPase activity and unwinds double-stranded RNA.</text>
</comment>
<comment type="catalytic activity">
    <reaction evidence="1">
        <text>ATP + H2O = ADP + phosphate + H(+)</text>
        <dbReference type="Rhea" id="RHEA:13065"/>
        <dbReference type="ChEBI" id="CHEBI:15377"/>
        <dbReference type="ChEBI" id="CHEBI:15378"/>
        <dbReference type="ChEBI" id="CHEBI:30616"/>
        <dbReference type="ChEBI" id="CHEBI:43474"/>
        <dbReference type="ChEBI" id="CHEBI:456216"/>
        <dbReference type="EC" id="3.6.4.13"/>
    </reaction>
</comment>
<comment type="subunit">
    <text evidence="1">Component of the RNA degradosome, which is a multiprotein complex involved in RNA processing and mRNA degradation.</text>
</comment>
<comment type="subcellular location">
    <subcellularLocation>
        <location evidence="1">Cytoplasm</location>
    </subcellularLocation>
</comment>
<comment type="similarity">
    <text evidence="1">Belongs to the DEAD box helicase family. RhlB subfamily.</text>
</comment>
<reference key="1">
    <citation type="journal article" date="2005" name="Nucleic Acids Res.">
        <title>Genome dynamics and diversity of Shigella species, the etiologic agents of bacillary dysentery.</title>
        <authorList>
            <person name="Yang F."/>
            <person name="Yang J."/>
            <person name="Zhang X."/>
            <person name="Chen L."/>
            <person name="Jiang Y."/>
            <person name="Yan Y."/>
            <person name="Tang X."/>
            <person name="Wang J."/>
            <person name="Xiong Z."/>
            <person name="Dong J."/>
            <person name="Xue Y."/>
            <person name="Zhu Y."/>
            <person name="Xu X."/>
            <person name="Sun L."/>
            <person name="Chen S."/>
            <person name="Nie H."/>
            <person name="Peng J."/>
            <person name="Xu J."/>
            <person name="Wang Y."/>
            <person name="Yuan Z."/>
            <person name="Wen Y."/>
            <person name="Yao Z."/>
            <person name="Shen Y."/>
            <person name="Qiang B."/>
            <person name="Hou Y."/>
            <person name="Yu J."/>
            <person name="Jin Q."/>
        </authorList>
    </citation>
    <scope>NUCLEOTIDE SEQUENCE [LARGE SCALE GENOMIC DNA]</scope>
    <source>
        <strain>Ss046</strain>
    </source>
</reference>
<evidence type="ECO:0000255" key="1">
    <source>
        <dbReference type="HAMAP-Rule" id="MF_00661"/>
    </source>
</evidence>
<evidence type="ECO:0000256" key="2">
    <source>
        <dbReference type="SAM" id="MobiDB-lite"/>
    </source>
</evidence>
<dbReference type="EC" id="3.6.4.13" evidence="1"/>
<dbReference type="EMBL" id="CP000038">
    <property type="protein sequence ID" value="AAZ90478.1"/>
    <property type="molecule type" value="Genomic_DNA"/>
</dbReference>
<dbReference type="RefSeq" id="WP_000047499.1">
    <property type="nucleotide sequence ID" value="NC_007384.1"/>
</dbReference>
<dbReference type="SMR" id="Q3YVI4"/>
<dbReference type="GeneID" id="93778164"/>
<dbReference type="KEGG" id="ssn:SSON_3951"/>
<dbReference type="HOGENOM" id="CLU_003041_1_3_6"/>
<dbReference type="Proteomes" id="UP000002529">
    <property type="component" value="Chromosome"/>
</dbReference>
<dbReference type="GO" id="GO:0005829">
    <property type="term" value="C:cytosol"/>
    <property type="evidence" value="ECO:0007669"/>
    <property type="project" value="TreeGrafter"/>
</dbReference>
<dbReference type="GO" id="GO:0005524">
    <property type="term" value="F:ATP binding"/>
    <property type="evidence" value="ECO:0007669"/>
    <property type="project" value="UniProtKB-UniRule"/>
</dbReference>
<dbReference type="GO" id="GO:0016887">
    <property type="term" value="F:ATP hydrolysis activity"/>
    <property type="evidence" value="ECO:0007669"/>
    <property type="project" value="RHEA"/>
</dbReference>
<dbReference type="GO" id="GO:0003723">
    <property type="term" value="F:RNA binding"/>
    <property type="evidence" value="ECO:0007669"/>
    <property type="project" value="UniProtKB-UniRule"/>
</dbReference>
<dbReference type="GO" id="GO:0003724">
    <property type="term" value="F:RNA helicase activity"/>
    <property type="evidence" value="ECO:0007669"/>
    <property type="project" value="UniProtKB-UniRule"/>
</dbReference>
<dbReference type="GO" id="GO:0006401">
    <property type="term" value="P:RNA catabolic process"/>
    <property type="evidence" value="ECO:0007669"/>
    <property type="project" value="UniProtKB-UniRule"/>
</dbReference>
<dbReference type="CDD" id="cd00268">
    <property type="entry name" value="DEADc"/>
    <property type="match status" value="1"/>
</dbReference>
<dbReference type="CDD" id="cd18787">
    <property type="entry name" value="SF2_C_DEAD"/>
    <property type="match status" value="1"/>
</dbReference>
<dbReference type="FunFam" id="3.40.50.300:FF:000008">
    <property type="entry name" value="ATP-dependent RNA helicase RhlB"/>
    <property type="match status" value="1"/>
</dbReference>
<dbReference type="FunFam" id="3.40.50.300:FF:000312">
    <property type="entry name" value="ATP-dependent RNA helicase RhlB"/>
    <property type="match status" value="1"/>
</dbReference>
<dbReference type="Gene3D" id="3.40.50.300">
    <property type="entry name" value="P-loop containing nucleotide triphosphate hydrolases"/>
    <property type="match status" value="2"/>
</dbReference>
<dbReference type="HAMAP" id="MF_00661">
    <property type="entry name" value="DEAD_helicase_RhlB"/>
    <property type="match status" value="1"/>
</dbReference>
<dbReference type="InterPro" id="IPR011545">
    <property type="entry name" value="DEAD/DEAH_box_helicase_dom"/>
</dbReference>
<dbReference type="InterPro" id="IPR050079">
    <property type="entry name" value="DEAD_box_RNA_helicase"/>
</dbReference>
<dbReference type="InterPro" id="IPR014001">
    <property type="entry name" value="Helicase_ATP-bd"/>
</dbReference>
<dbReference type="InterPro" id="IPR001650">
    <property type="entry name" value="Helicase_C-like"/>
</dbReference>
<dbReference type="InterPro" id="IPR027417">
    <property type="entry name" value="P-loop_NTPase"/>
</dbReference>
<dbReference type="InterPro" id="IPR000629">
    <property type="entry name" value="RNA-helicase_DEAD-box_CS"/>
</dbReference>
<dbReference type="InterPro" id="IPR023554">
    <property type="entry name" value="RNA_helicase_ATP-dep_RhlB"/>
</dbReference>
<dbReference type="InterPro" id="IPR014014">
    <property type="entry name" value="RNA_helicase_DEAD_Q_motif"/>
</dbReference>
<dbReference type="NCBIfam" id="NF003419">
    <property type="entry name" value="PRK04837.1"/>
    <property type="match status" value="1"/>
</dbReference>
<dbReference type="PANTHER" id="PTHR47959:SF10">
    <property type="entry name" value="ATP-DEPENDENT RNA HELICASE RHLB"/>
    <property type="match status" value="1"/>
</dbReference>
<dbReference type="PANTHER" id="PTHR47959">
    <property type="entry name" value="ATP-DEPENDENT RNA HELICASE RHLE-RELATED"/>
    <property type="match status" value="1"/>
</dbReference>
<dbReference type="Pfam" id="PF00270">
    <property type="entry name" value="DEAD"/>
    <property type="match status" value="1"/>
</dbReference>
<dbReference type="Pfam" id="PF00271">
    <property type="entry name" value="Helicase_C"/>
    <property type="match status" value="1"/>
</dbReference>
<dbReference type="SMART" id="SM00487">
    <property type="entry name" value="DEXDc"/>
    <property type="match status" value="1"/>
</dbReference>
<dbReference type="SMART" id="SM00490">
    <property type="entry name" value="HELICc"/>
    <property type="match status" value="1"/>
</dbReference>
<dbReference type="SUPFAM" id="SSF52540">
    <property type="entry name" value="P-loop containing nucleoside triphosphate hydrolases"/>
    <property type="match status" value="1"/>
</dbReference>
<dbReference type="PROSITE" id="PS00039">
    <property type="entry name" value="DEAD_ATP_HELICASE"/>
    <property type="match status" value="1"/>
</dbReference>
<dbReference type="PROSITE" id="PS51192">
    <property type="entry name" value="HELICASE_ATP_BIND_1"/>
    <property type="match status" value="1"/>
</dbReference>
<dbReference type="PROSITE" id="PS51194">
    <property type="entry name" value="HELICASE_CTER"/>
    <property type="match status" value="1"/>
</dbReference>
<dbReference type="PROSITE" id="PS51195">
    <property type="entry name" value="Q_MOTIF"/>
    <property type="match status" value="1"/>
</dbReference>
<name>RHLB_SHISS</name>
<feature type="chain" id="PRO_1000082874" description="ATP-dependent RNA helicase RhlB">
    <location>
        <begin position="1"/>
        <end position="421"/>
    </location>
</feature>
<feature type="domain" description="Helicase ATP-binding" evidence="1">
    <location>
        <begin position="40"/>
        <end position="219"/>
    </location>
</feature>
<feature type="domain" description="Helicase C-terminal" evidence="1">
    <location>
        <begin position="245"/>
        <end position="390"/>
    </location>
</feature>
<feature type="region of interest" description="Disordered" evidence="2">
    <location>
        <begin position="392"/>
        <end position="421"/>
    </location>
</feature>
<feature type="short sequence motif" description="Q motif">
    <location>
        <begin position="9"/>
        <end position="37"/>
    </location>
</feature>
<feature type="short sequence motif" description="DEAD box">
    <location>
        <begin position="165"/>
        <end position="168"/>
    </location>
</feature>
<feature type="compositionally biased region" description="Low complexity" evidence="2">
    <location>
        <begin position="402"/>
        <end position="414"/>
    </location>
</feature>
<feature type="binding site" evidence="1">
    <location>
        <begin position="53"/>
        <end position="60"/>
    </location>
    <ligand>
        <name>ATP</name>
        <dbReference type="ChEBI" id="CHEBI:30616"/>
    </ligand>
</feature>
<organism>
    <name type="scientific">Shigella sonnei (strain Ss046)</name>
    <dbReference type="NCBI Taxonomy" id="300269"/>
    <lineage>
        <taxon>Bacteria</taxon>
        <taxon>Pseudomonadati</taxon>
        <taxon>Pseudomonadota</taxon>
        <taxon>Gammaproteobacteria</taxon>
        <taxon>Enterobacterales</taxon>
        <taxon>Enterobacteriaceae</taxon>
        <taxon>Shigella</taxon>
    </lineage>
</organism>
<sequence>MSKTHLTEQKFSDFALHPKVVEALEKKGFHNCTPIQALALPLTLAGRDVAGQAQTGTGKTMAFLTSTFHYLLSHPAIADRKVNQPRALIMAPTRELAVQIHADAEPLAEATGLKLGLAYGGDGYDKQLKVLESGVDILIGTTGRLIDYAKQNHINLGAIQVVVLDEADRMYDLGFIKDIRWLFRRMPPANQRLNMLFSATLSYRVRELAFEQMNNAEYIEVEPEQKTGHRIKEELFYPSNEEKMRLLQTLIEEEWPDRAIIFANTKHRCEEIWGHLAADGHRVGLLTGDVAQKKRLRILDEFTRGDLDILVATDVAARGLHIPAVTHVFNYDLPDDCEDYVHRIGRTGRAGASGHSISLACEEYALNLPAIETYIGHSIPVSKYNPDALMTDLPKPLRLTRPRTGNGPRRTGAPRNRRRSG</sequence>
<keyword id="KW-0067">ATP-binding</keyword>
<keyword id="KW-0963">Cytoplasm</keyword>
<keyword id="KW-0347">Helicase</keyword>
<keyword id="KW-0378">Hydrolase</keyword>
<keyword id="KW-0547">Nucleotide-binding</keyword>
<keyword id="KW-1185">Reference proteome</keyword>
<keyword id="KW-0694">RNA-binding</keyword>
<protein>
    <recommendedName>
        <fullName evidence="1">ATP-dependent RNA helicase RhlB</fullName>
        <ecNumber evidence="1">3.6.4.13</ecNumber>
    </recommendedName>
</protein>